<proteinExistence type="evidence at protein level"/>
<accession>P35172</accession>
<accession>D6VQ02</accession>
<gene>
    <name type="primary">NTH2</name>
    <name type="ordered locus">YBR001C</name>
    <name type="ORF">YBR0106</name>
</gene>
<protein>
    <recommendedName>
        <fullName>Probable trehalase</fullName>
        <ecNumber>3.2.1.28</ecNumber>
    </recommendedName>
    <alternativeName>
        <fullName>Alpha,alpha-trehalase</fullName>
    </alternativeName>
    <alternativeName>
        <fullName>Alpha,alpha-trehalose glucohydrolase</fullName>
    </alternativeName>
</protein>
<sequence length="780" mass="89679">MVDFLPKVTEINPPSEGNDGEDNIKPLSSGSEQRPLKEEGQQGGRRHHRRLSSMHEYFDPFSNAEVYYGPITDPRKQSKIHRLNRTRTMSVFNKVSDFKNGMKDYTLKRRGSEDDSFLSSQGNRRFYIDNVDLALDELLASEDTDKNHQITIEDTGPKVIKVGTANSNGFKHVNVRGTYMLSNLLQELTIAKSFGRHQIFLDEARINENPVDRLSRLITTQFWTSLTRRVDLYNIAEIARDSKIDTPGAKNPRIYVPYNCPEQYEFYIQASQMNPSLKLEVEYLPKDITAEYVKSLNDTPGLLALAMEEHVNPSTGERSLVGYPYAVPGGRFNELYGWDSYLMALGLIESNKVDVARGMVEHFIFEIDHYSKILNANRSYYLCRSQPPFLTDMALLVFEKIGGKNNPNAIQLLKRAFRAAIKEYKEVWMSSPRLDSLTGLSCYHSDGIGIPPETEPDHFDTILLPYAEKYNVTLEKLRYLYNEGMIKEPKLDAFFLHDRAVRESGHDTTYRFEGVCAYLATIDLNSLLYKYEKDIAFVIKEYFGNEYKDENDGTVTDSEHWEELAELRKTRINKYMWDEDSGFFFYYNTKLKCRTSYESATTFWSLWAGLATEEQAKITVEKALPQLEMLGGLVACTEKSRGPISIDRPIRQWDYPFGWAPHQILAWKGLSAYGYQQVATRLAYRWLYMITKSFVDYNGMVVEKYDVTRGTDPHRVDAEYGNQGADFKGVATEGFGWVNTSYLLGLKYMNNHARRALAACSPPLPFFNSLKPSEKKLYYL</sequence>
<evidence type="ECO:0000250" key="1"/>
<evidence type="ECO:0000256" key="2">
    <source>
        <dbReference type="SAM" id="MobiDB-lite"/>
    </source>
</evidence>
<evidence type="ECO:0000269" key="3">
    <source>
    </source>
</evidence>
<evidence type="ECO:0000305" key="4"/>
<evidence type="ECO:0007744" key="5">
    <source>
    </source>
</evidence>
<evidence type="ECO:0007744" key="6">
    <source>
    </source>
</evidence>
<evidence type="ECO:0007744" key="7">
    <source>
    </source>
</evidence>
<feature type="chain" id="PRO_0000173800" description="Probable trehalase">
    <location>
        <begin position="1"/>
        <end position="780"/>
    </location>
</feature>
<feature type="region of interest" description="Disordered" evidence="2">
    <location>
        <begin position="1"/>
        <end position="48"/>
    </location>
</feature>
<feature type="active site" description="Proton donor/acceptor" evidence="1">
    <location>
        <position position="507"/>
    </location>
</feature>
<feature type="active site" description="Proton donor/acceptor" evidence="1">
    <location>
        <position position="703"/>
    </location>
</feature>
<feature type="binding site" evidence="1">
    <location>
        <position position="331"/>
    </location>
    <ligand>
        <name>substrate</name>
    </ligand>
</feature>
<feature type="binding site" evidence="1">
    <location>
        <begin position="338"/>
        <end position="339"/>
    </location>
    <ligand>
        <name>substrate</name>
    </ligand>
</feature>
<feature type="binding site" evidence="1">
    <location>
        <position position="375"/>
    </location>
    <ligand>
        <name>substrate</name>
    </ligand>
</feature>
<feature type="binding site" evidence="1">
    <location>
        <begin position="384"/>
        <end position="386"/>
    </location>
    <ligand>
        <name>substrate</name>
    </ligand>
</feature>
<feature type="binding site" evidence="1">
    <location>
        <position position="384"/>
    </location>
    <ligand>
        <name>substrate</name>
    </ligand>
</feature>
<feature type="binding site" evidence="1">
    <location>
        <position position="505"/>
    </location>
    <ligand>
        <name>substrate</name>
    </ligand>
</feature>
<feature type="modified residue" description="Phosphoserine" evidence="7">
    <location>
        <position position="52"/>
    </location>
</feature>
<feature type="modified residue" description="Phosphoserine" evidence="7">
    <location>
        <position position="53"/>
    </location>
</feature>
<feature type="modified residue" description="Phosphothreonine" evidence="5">
    <location>
        <position position="88"/>
    </location>
</feature>
<feature type="modified residue" description="Phosphoserine" evidence="6 7">
    <location>
        <position position="112"/>
    </location>
</feature>
<organism>
    <name type="scientific">Saccharomyces cerevisiae (strain ATCC 204508 / S288c)</name>
    <name type="common">Baker's yeast</name>
    <dbReference type="NCBI Taxonomy" id="559292"/>
    <lineage>
        <taxon>Eukaryota</taxon>
        <taxon>Fungi</taxon>
        <taxon>Dikarya</taxon>
        <taxon>Ascomycota</taxon>
        <taxon>Saccharomycotina</taxon>
        <taxon>Saccharomycetes</taxon>
        <taxon>Saccharomycetales</taxon>
        <taxon>Saccharomycetaceae</taxon>
        <taxon>Saccharomyces</taxon>
    </lineage>
</organism>
<dbReference type="EC" id="3.2.1.28"/>
<dbReference type="EMBL" id="Z26494">
    <property type="protein sequence ID" value="CAA81270.1"/>
    <property type="molecule type" value="Genomic_DNA"/>
</dbReference>
<dbReference type="EMBL" id="Z35870">
    <property type="protein sequence ID" value="CAA84937.1"/>
    <property type="molecule type" value="Genomic_DNA"/>
</dbReference>
<dbReference type="EMBL" id="BK006936">
    <property type="protein sequence ID" value="DAA07122.1"/>
    <property type="molecule type" value="Genomic_DNA"/>
</dbReference>
<dbReference type="PIR" id="S44560">
    <property type="entry name" value="S44560"/>
</dbReference>
<dbReference type="RefSeq" id="NP_009555.1">
    <property type="nucleotide sequence ID" value="NM_001178349.1"/>
</dbReference>
<dbReference type="SMR" id="P35172"/>
<dbReference type="BioGRID" id="32702">
    <property type="interactions" value="79"/>
</dbReference>
<dbReference type="DIP" id="DIP-6841N"/>
<dbReference type="FunCoup" id="P35172">
    <property type="interactions" value="382"/>
</dbReference>
<dbReference type="IntAct" id="P35172">
    <property type="interactions" value="5"/>
</dbReference>
<dbReference type="MINT" id="P35172"/>
<dbReference type="STRING" id="4932.YBR001C"/>
<dbReference type="CAZy" id="GH37">
    <property type="family name" value="Glycoside Hydrolase Family 37"/>
</dbReference>
<dbReference type="iPTMnet" id="P35172"/>
<dbReference type="PaxDb" id="4932-YBR001C"/>
<dbReference type="PeptideAtlas" id="P35172"/>
<dbReference type="EnsemblFungi" id="YBR001C_mRNA">
    <property type="protein sequence ID" value="YBR001C"/>
    <property type="gene ID" value="YBR001C"/>
</dbReference>
<dbReference type="GeneID" id="852286"/>
<dbReference type="KEGG" id="sce:YBR001C"/>
<dbReference type="AGR" id="SGD:S000000205"/>
<dbReference type="SGD" id="S000000205">
    <property type="gene designation" value="NTH2"/>
</dbReference>
<dbReference type="VEuPathDB" id="FungiDB:YBR001C"/>
<dbReference type="eggNOG" id="KOG0602">
    <property type="taxonomic scope" value="Eukaryota"/>
</dbReference>
<dbReference type="GeneTree" id="ENSGT00390000006949"/>
<dbReference type="HOGENOM" id="CLU_006451_1_1_1"/>
<dbReference type="InParanoid" id="P35172"/>
<dbReference type="OMA" id="ESATAYW"/>
<dbReference type="OrthoDB" id="3542292at2759"/>
<dbReference type="BioCyc" id="MetaCyc:YBR001C-MONOMER"/>
<dbReference type="BioCyc" id="YEAST:YBR001C-MONOMER"/>
<dbReference type="BioGRID-ORCS" id="852286">
    <property type="hits" value="0 hits in 10 CRISPR screens"/>
</dbReference>
<dbReference type="PRO" id="PR:P35172"/>
<dbReference type="Proteomes" id="UP000002311">
    <property type="component" value="Chromosome II"/>
</dbReference>
<dbReference type="RNAct" id="P35172">
    <property type="molecule type" value="protein"/>
</dbReference>
<dbReference type="GO" id="GO:0005737">
    <property type="term" value="C:cytoplasm"/>
    <property type="evidence" value="ECO:0007005"/>
    <property type="project" value="SGD"/>
</dbReference>
<dbReference type="GO" id="GO:0005739">
    <property type="term" value="C:mitochondrion"/>
    <property type="evidence" value="ECO:0007005"/>
    <property type="project" value="SGD"/>
</dbReference>
<dbReference type="GO" id="GO:0004555">
    <property type="term" value="F:alpha,alpha-trehalase activity"/>
    <property type="evidence" value="ECO:0000315"/>
    <property type="project" value="SGD"/>
</dbReference>
<dbReference type="GO" id="GO:0005509">
    <property type="term" value="F:calcium ion binding"/>
    <property type="evidence" value="ECO:0007669"/>
    <property type="project" value="InterPro"/>
</dbReference>
<dbReference type="GO" id="GO:0005993">
    <property type="term" value="P:trehalose catabolic process"/>
    <property type="evidence" value="ECO:0000315"/>
    <property type="project" value="SGD"/>
</dbReference>
<dbReference type="FunFam" id="1.50.10.10:FF:000026">
    <property type="entry name" value="Trehalase"/>
    <property type="match status" value="1"/>
</dbReference>
<dbReference type="Gene3D" id="1.50.10.10">
    <property type="match status" value="1"/>
</dbReference>
<dbReference type="InterPro" id="IPR008928">
    <property type="entry name" value="6-hairpin_glycosidase_sf"/>
</dbReference>
<dbReference type="InterPro" id="IPR012341">
    <property type="entry name" value="6hp_glycosidase-like_sf"/>
</dbReference>
<dbReference type="InterPro" id="IPR001661">
    <property type="entry name" value="Glyco_hydro_37"/>
</dbReference>
<dbReference type="InterPro" id="IPR018232">
    <property type="entry name" value="Glyco_hydro_37_CS"/>
</dbReference>
<dbReference type="InterPro" id="IPR011120">
    <property type="entry name" value="Trehalase_Ca-bd"/>
</dbReference>
<dbReference type="PANTHER" id="PTHR23403:SF6">
    <property type="entry name" value="CYTOSOLIC NEUTRAL TREHALASE-RELATED"/>
    <property type="match status" value="1"/>
</dbReference>
<dbReference type="PANTHER" id="PTHR23403">
    <property type="entry name" value="TREHALASE"/>
    <property type="match status" value="1"/>
</dbReference>
<dbReference type="Pfam" id="PF01204">
    <property type="entry name" value="Trehalase"/>
    <property type="match status" value="1"/>
</dbReference>
<dbReference type="Pfam" id="PF07492">
    <property type="entry name" value="Trehalase_Ca-bi"/>
    <property type="match status" value="1"/>
</dbReference>
<dbReference type="PRINTS" id="PR00744">
    <property type="entry name" value="GLHYDRLASE37"/>
</dbReference>
<dbReference type="SUPFAM" id="SSF48208">
    <property type="entry name" value="Six-hairpin glycosidases"/>
    <property type="match status" value="1"/>
</dbReference>
<dbReference type="PROSITE" id="PS00927">
    <property type="entry name" value="TREHALASE_1"/>
    <property type="match status" value="1"/>
</dbReference>
<dbReference type="PROSITE" id="PS00928">
    <property type="entry name" value="TREHALASE_2"/>
    <property type="match status" value="1"/>
</dbReference>
<reference key="1">
    <citation type="journal article" date="1994" name="Yeast">
        <title>Sequence around the centromere of Saccharomyces cerevisiae chromosome II: similarity of CEN2 to CEN4.</title>
        <authorList>
            <person name="Wolfe K.H."/>
            <person name="Lohan A.J.E."/>
        </authorList>
    </citation>
    <scope>NUCLEOTIDE SEQUENCE [GENOMIC DNA]</scope>
    <source>
        <strain>ATCC 204508 / S288c</strain>
    </source>
</reference>
<reference key="2">
    <citation type="journal article" date="1994" name="EMBO J.">
        <title>Complete DNA sequence of yeast chromosome II.</title>
        <authorList>
            <person name="Feldmann H."/>
            <person name="Aigle M."/>
            <person name="Aljinovic G."/>
            <person name="Andre B."/>
            <person name="Baclet M.C."/>
            <person name="Barthe C."/>
            <person name="Baur A."/>
            <person name="Becam A.-M."/>
            <person name="Biteau N."/>
            <person name="Boles E."/>
            <person name="Brandt T."/>
            <person name="Brendel M."/>
            <person name="Brueckner M."/>
            <person name="Bussereau F."/>
            <person name="Christiansen C."/>
            <person name="Contreras R."/>
            <person name="Crouzet M."/>
            <person name="Cziepluch C."/>
            <person name="Demolis N."/>
            <person name="Delaveau T."/>
            <person name="Doignon F."/>
            <person name="Domdey H."/>
            <person name="Duesterhus S."/>
            <person name="Dubois E."/>
            <person name="Dujon B."/>
            <person name="El Bakkoury M."/>
            <person name="Entian K.-D."/>
            <person name="Feuermann M."/>
            <person name="Fiers W."/>
            <person name="Fobo G.M."/>
            <person name="Fritz C."/>
            <person name="Gassenhuber J."/>
            <person name="Glansdorff N."/>
            <person name="Goffeau A."/>
            <person name="Grivell L.A."/>
            <person name="de Haan M."/>
            <person name="Hein C."/>
            <person name="Herbert C.J."/>
            <person name="Hollenberg C.P."/>
            <person name="Holmstroem K."/>
            <person name="Jacq C."/>
            <person name="Jacquet M."/>
            <person name="Jauniaux J.-C."/>
            <person name="Jonniaux J.-L."/>
            <person name="Kallesoee T."/>
            <person name="Kiesau P."/>
            <person name="Kirchrath L."/>
            <person name="Koetter P."/>
            <person name="Korol S."/>
            <person name="Liebl S."/>
            <person name="Logghe M."/>
            <person name="Lohan A.J.E."/>
            <person name="Louis E.J."/>
            <person name="Li Z.Y."/>
            <person name="Maat M.J."/>
            <person name="Mallet L."/>
            <person name="Mannhaupt G."/>
            <person name="Messenguy F."/>
            <person name="Miosga T."/>
            <person name="Molemans F."/>
            <person name="Mueller S."/>
            <person name="Nasr F."/>
            <person name="Obermaier B."/>
            <person name="Perea J."/>
            <person name="Pierard A."/>
            <person name="Piravandi E."/>
            <person name="Pohl F.M."/>
            <person name="Pohl T.M."/>
            <person name="Potier S."/>
            <person name="Proft M."/>
            <person name="Purnelle B."/>
            <person name="Ramezani Rad M."/>
            <person name="Rieger M."/>
            <person name="Rose M."/>
            <person name="Schaaff-Gerstenschlaeger I."/>
            <person name="Scherens B."/>
            <person name="Schwarzlose C."/>
            <person name="Skala J."/>
            <person name="Slonimski P.P."/>
            <person name="Smits P.H.M."/>
            <person name="Souciet J.-L."/>
            <person name="Steensma H.Y."/>
            <person name="Stucka R."/>
            <person name="Urrestarazu L.A."/>
            <person name="van der Aart Q.J.M."/>
            <person name="Van Dyck L."/>
            <person name="Vassarotti A."/>
            <person name="Vetter I."/>
            <person name="Vierendeels F."/>
            <person name="Vissers S."/>
            <person name="Wagner G."/>
            <person name="de Wergifosse P."/>
            <person name="Wolfe K.H."/>
            <person name="Zagulski M."/>
            <person name="Zimmermann F.K."/>
            <person name="Mewes H.-W."/>
            <person name="Kleine K."/>
        </authorList>
    </citation>
    <scope>NUCLEOTIDE SEQUENCE [LARGE SCALE GENOMIC DNA]</scope>
    <source>
        <strain>ATCC 204508 / S288c</strain>
    </source>
</reference>
<reference key="3">
    <citation type="journal article" date="2014" name="G3 (Bethesda)">
        <title>The reference genome sequence of Saccharomyces cerevisiae: Then and now.</title>
        <authorList>
            <person name="Engel S.R."/>
            <person name="Dietrich F.S."/>
            <person name="Fisk D.G."/>
            <person name="Binkley G."/>
            <person name="Balakrishnan R."/>
            <person name="Costanzo M.C."/>
            <person name="Dwight S.S."/>
            <person name="Hitz B.C."/>
            <person name="Karra K."/>
            <person name="Nash R.S."/>
            <person name="Weng S."/>
            <person name="Wong E.D."/>
            <person name="Lloyd P."/>
            <person name="Skrzypek M.S."/>
            <person name="Miyasato S.R."/>
            <person name="Simison M."/>
            <person name="Cherry J.M."/>
        </authorList>
    </citation>
    <scope>GENOME REANNOTATION</scope>
    <source>
        <strain>ATCC 204508 / S288c</strain>
    </source>
</reference>
<reference key="4">
    <citation type="journal article" date="1995" name="J. Biol. Chem.">
        <title>Expression and function of the trehalase genes NTH1 and YBR0106 in Saccharomyces cerevisiae.</title>
        <authorList>
            <person name="Nwaka S."/>
            <person name="Kopp M."/>
            <person name="Holzer H."/>
        </authorList>
    </citation>
    <scope>CHARACTERIZATION</scope>
</reference>
<reference key="5">
    <citation type="journal article" date="2003" name="Nature">
        <title>Global analysis of protein expression in yeast.</title>
        <authorList>
            <person name="Ghaemmaghami S."/>
            <person name="Huh W.-K."/>
            <person name="Bower K."/>
            <person name="Howson R.W."/>
            <person name="Belle A."/>
            <person name="Dephoure N."/>
            <person name="O'Shea E.K."/>
            <person name="Weissman J.S."/>
        </authorList>
    </citation>
    <scope>LEVEL OF PROTEIN EXPRESSION [LARGE SCALE ANALYSIS]</scope>
</reference>
<reference key="6">
    <citation type="journal article" date="2007" name="Proc. Natl. Acad. Sci. U.S.A.">
        <title>Analysis of phosphorylation sites on proteins from Saccharomyces cerevisiae by electron transfer dissociation (ETD) mass spectrometry.</title>
        <authorList>
            <person name="Chi A."/>
            <person name="Huttenhower C."/>
            <person name="Geer L.Y."/>
            <person name="Coon J.J."/>
            <person name="Syka J.E.P."/>
            <person name="Bai D.L."/>
            <person name="Shabanowitz J."/>
            <person name="Burke D.J."/>
            <person name="Troyanskaya O.G."/>
            <person name="Hunt D.F."/>
        </authorList>
    </citation>
    <scope>PHOSPHORYLATION [LARGE SCALE ANALYSIS] AT THR-88</scope>
    <scope>IDENTIFICATION BY MASS SPECTROMETRY [LARGE SCALE ANALYSIS]</scope>
</reference>
<reference key="7">
    <citation type="journal article" date="2008" name="Mol. Cell. Proteomics">
        <title>A multidimensional chromatography technology for in-depth phosphoproteome analysis.</title>
        <authorList>
            <person name="Albuquerque C.P."/>
            <person name="Smolka M.B."/>
            <person name="Payne S.H."/>
            <person name="Bafna V."/>
            <person name="Eng J."/>
            <person name="Zhou H."/>
        </authorList>
    </citation>
    <scope>PHOSPHORYLATION [LARGE SCALE ANALYSIS] AT SER-112</scope>
    <scope>IDENTIFICATION BY MASS SPECTROMETRY [LARGE SCALE ANALYSIS]</scope>
</reference>
<reference key="8">
    <citation type="journal article" date="2009" name="Science">
        <title>Global analysis of Cdk1 substrate phosphorylation sites provides insights into evolution.</title>
        <authorList>
            <person name="Holt L.J."/>
            <person name="Tuch B.B."/>
            <person name="Villen J."/>
            <person name="Johnson A.D."/>
            <person name="Gygi S.P."/>
            <person name="Morgan D.O."/>
        </authorList>
    </citation>
    <scope>PHOSPHORYLATION [LARGE SCALE ANALYSIS] AT SER-52; SER-53 AND SER-112</scope>
    <scope>IDENTIFICATION BY MASS SPECTROMETRY [LARGE SCALE ANALYSIS]</scope>
</reference>
<keyword id="KW-0326">Glycosidase</keyword>
<keyword id="KW-0378">Hydrolase</keyword>
<keyword id="KW-0597">Phosphoprotein</keyword>
<keyword id="KW-1185">Reference proteome</keyword>
<comment type="catalytic activity">
    <reaction>
        <text>alpha,alpha-trehalose + H2O = alpha-D-glucose + beta-D-glucose</text>
        <dbReference type="Rhea" id="RHEA:32675"/>
        <dbReference type="ChEBI" id="CHEBI:15377"/>
        <dbReference type="ChEBI" id="CHEBI:15903"/>
        <dbReference type="ChEBI" id="CHEBI:16551"/>
        <dbReference type="ChEBI" id="CHEBI:17925"/>
        <dbReference type="EC" id="3.2.1.28"/>
    </reaction>
</comment>
<comment type="miscellaneous">
    <text evidence="3">Present with 2500 molecules/cell in log phase SD medium.</text>
</comment>
<comment type="similarity">
    <text evidence="4">Belongs to the glycosyl hydrolase 37 family.</text>
</comment>
<name>TREB_YEAST</name>